<organism>
    <name type="scientific">Homo sapiens</name>
    <name type="common">Human</name>
    <dbReference type="NCBI Taxonomy" id="9606"/>
    <lineage>
        <taxon>Eukaryota</taxon>
        <taxon>Metazoa</taxon>
        <taxon>Chordata</taxon>
        <taxon>Craniata</taxon>
        <taxon>Vertebrata</taxon>
        <taxon>Euteleostomi</taxon>
        <taxon>Mammalia</taxon>
        <taxon>Eutheria</taxon>
        <taxon>Euarchontoglires</taxon>
        <taxon>Primates</taxon>
        <taxon>Haplorrhini</taxon>
        <taxon>Catarrhini</taxon>
        <taxon>Hominidae</taxon>
        <taxon>Homo</taxon>
    </lineage>
</organism>
<dbReference type="EC" id="2.3.1.48" evidence="16 19 22 26"/>
<dbReference type="EC" id="2.3.1.-" evidence="27 22"/>
<dbReference type="EMBL" id="AF029777">
    <property type="protein sequence ID" value="AAC39769.1"/>
    <property type="molecule type" value="mRNA"/>
</dbReference>
<dbReference type="EMBL" id="CH471152">
    <property type="protein sequence ID" value="EAW60803.1"/>
    <property type="molecule type" value="Genomic_DNA"/>
</dbReference>
<dbReference type="EMBL" id="BC032743">
    <property type="protein sequence ID" value="AAH32743.1"/>
    <property type="molecule type" value="mRNA"/>
</dbReference>
<dbReference type="EMBL" id="BC039907">
    <property type="protein sequence ID" value="AAH39907.1"/>
    <property type="molecule type" value="mRNA"/>
</dbReference>
<dbReference type="EMBL" id="BC105977">
    <property type="protein sequence ID" value="AAI05978.1"/>
    <property type="molecule type" value="mRNA"/>
</dbReference>
<dbReference type="EMBL" id="U57316">
    <property type="protein sequence ID" value="AAC50641.1"/>
    <property type="molecule type" value="Genomic_DNA"/>
</dbReference>
<dbReference type="CCDS" id="CCDS11417.1">
    <molecule id="Q92830-1"/>
</dbReference>
<dbReference type="PIR" id="S71789">
    <property type="entry name" value="S71789"/>
</dbReference>
<dbReference type="RefSeq" id="NP_066564.2">
    <molecule id="Q92830-1"/>
    <property type="nucleotide sequence ID" value="NM_021078.3"/>
</dbReference>
<dbReference type="RefSeq" id="XP_016879937.1">
    <property type="nucleotide sequence ID" value="XM_017024448.1"/>
</dbReference>
<dbReference type="PDB" id="1F68">
    <property type="method" value="NMR"/>
    <property type="chains" value="A=730-832"/>
</dbReference>
<dbReference type="PDB" id="1Z4R">
    <property type="method" value="X-ray"/>
    <property type="resolution" value="1.74 A"/>
    <property type="chains" value="A=497-662"/>
</dbReference>
<dbReference type="PDB" id="3D7C">
    <property type="method" value="X-ray"/>
    <property type="resolution" value="2.06 A"/>
    <property type="chains" value="A/B=729-837"/>
</dbReference>
<dbReference type="PDB" id="5H84">
    <property type="method" value="X-ray"/>
    <property type="resolution" value="2.00 A"/>
    <property type="chains" value="A=497-662"/>
</dbReference>
<dbReference type="PDB" id="5H86">
    <property type="method" value="X-ray"/>
    <property type="resolution" value="2.08 A"/>
    <property type="chains" value="A=497-662"/>
</dbReference>
<dbReference type="PDB" id="5MLJ">
    <property type="method" value="X-ray"/>
    <property type="resolution" value="1.80 A"/>
    <property type="chains" value="A/B=729-837"/>
</dbReference>
<dbReference type="PDB" id="5TRL">
    <property type="method" value="X-ray"/>
    <property type="resolution" value="2.30 A"/>
    <property type="chains" value="A/B/C/D/E/F/G/H=497-662"/>
</dbReference>
<dbReference type="PDB" id="5TRM">
    <property type="method" value="X-ray"/>
    <property type="resolution" value="2.90 A"/>
    <property type="chains" value="A/B/C/D/E/F/G/H/I/J/K/L/M/N/O/P/Q/R/S/T/U/V/W/X=497-662"/>
</dbReference>
<dbReference type="PDB" id="6J3P">
    <property type="method" value="X-ray"/>
    <property type="resolution" value="1.60 A"/>
    <property type="chains" value="A/B=726-837"/>
</dbReference>
<dbReference type="PDB" id="8E6O">
    <property type="method" value="X-ray"/>
    <property type="resolution" value="2.37 A"/>
    <property type="chains" value="A/B/C=498-662"/>
</dbReference>
<dbReference type="PDB" id="8H65">
    <property type="method" value="X-ray"/>
    <property type="resolution" value="3.00 A"/>
    <property type="chains" value="A/B/C/D/E/F/G/H=497-662"/>
</dbReference>
<dbReference type="PDB" id="8H66">
    <property type="method" value="X-ray"/>
    <property type="resolution" value="2.80 A"/>
    <property type="chains" value="A/B/C/D/E/F/G/H=497-662"/>
</dbReference>
<dbReference type="PDB" id="8H6C">
    <property type="method" value="X-ray"/>
    <property type="resolution" value="2.50 A"/>
    <property type="chains" value="A/B/C/D/E/F/G/H=497-662"/>
</dbReference>
<dbReference type="PDB" id="8H6D">
    <property type="method" value="X-ray"/>
    <property type="resolution" value="3.26 A"/>
    <property type="chains" value="A/B/C/D/E/F/G/H=497-662"/>
</dbReference>
<dbReference type="PDBsum" id="1F68"/>
<dbReference type="PDBsum" id="1Z4R"/>
<dbReference type="PDBsum" id="3D7C"/>
<dbReference type="PDBsum" id="5H84"/>
<dbReference type="PDBsum" id="5H86"/>
<dbReference type="PDBsum" id="5MLJ"/>
<dbReference type="PDBsum" id="5TRL"/>
<dbReference type="PDBsum" id="5TRM"/>
<dbReference type="PDBsum" id="6J3P"/>
<dbReference type="PDBsum" id="8E6O"/>
<dbReference type="PDBsum" id="8H65"/>
<dbReference type="PDBsum" id="8H66"/>
<dbReference type="PDBsum" id="8H6C"/>
<dbReference type="PDBsum" id="8H6D"/>
<dbReference type="SMR" id="Q92830"/>
<dbReference type="BioGRID" id="108918">
    <property type="interactions" value="184"/>
</dbReference>
<dbReference type="ComplexPortal" id="CPX-900">
    <property type="entry name" value="SAGA complex, KAT2A variant"/>
</dbReference>
<dbReference type="ComplexPortal" id="CPX-903">
    <property type="entry name" value="TFTC histone acetylation complex"/>
</dbReference>
<dbReference type="ComplexPortal" id="CPX-997">
    <property type="entry name" value="GCN5-containing ATAC complex"/>
</dbReference>
<dbReference type="CORUM" id="Q92830"/>
<dbReference type="DIP" id="DIP-28146N"/>
<dbReference type="FunCoup" id="Q92830">
    <property type="interactions" value="1384"/>
</dbReference>
<dbReference type="IntAct" id="Q92830">
    <property type="interactions" value="79"/>
</dbReference>
<dbReference type="MINT" id="Q92830"/>
<dbReference type="STRING" id="9606.ENSP00000225916"/>
<dbReference type="BindingDB" id="Q92830"/>
<dbReference type="ChEMBL" id="CHEMBL5501"/>
<dbReference type="DrugBank" id="DB01992">
    <property type="generic name" value="Coenzyme A"/>
</dbReference>
<dbReference type="GlyGen" id="Q92830">
    <property type="glycosylation" value="7 sites, 1 O-linked glycan (1 site)"/>
</dbReference>
<dbReference type="iPTMnet" id="Q92830"/>
<dbReference type="PhosphoSitePlus" id="Q92830"/>
<dbReference type="BioMuta" id="KAT2A"/>
<dbReference type="DMDM" id="209572743"/>
<dbReference type="jPOST" id="Q92830"/>
<dbReference type="MassIVE" id="Q92830"/>
<dbReference type="PaxDb" id="9606-ENSP00000225916"/>
<dbReference type="PeptideAtlas" id="Q92830"/>
<dbReference type="ProteomicsDB" id="75506">
    <molecule id="Q92830-1"/>
</dbReference>
<dbReference type="ProteomicsDB" id="75507">
    <molecule id="Q92830-2"/>
</dbReference>
<dbReference type="Pumba" id="Q92830"/>
<dbReference type="Antibodypedia" id="29117">
    <property type="antibodies" value="360 antibodies from 35 providers"/>
</dbReference>
<dbReference type="DNASU" id="2648"/>
<dbReference type="Ensembl" id="ENST00000225916.10">
    <molecule id="Q92830-1"/>
    <property type="protein sequence ID" value="ENSP00000225916.5"/>
    <property type="gene ID" value="ENSG00000108773.11"/>
</dbReference>
<dbReference type="GeneID" id="2648"/>
<dbReference type="KEGG" id="hsa:2648"/>
<dbReference type="MANE-Select" id="ENST00000225916.10">
    <property type="protein sequence ID" value="ENSP00000225916.5"/>
    <property type="RefSeq nucleotide sequence ID" value="NM_021078.3"/>
    <property type="RefSeq protein sequence ID" value="NP_066564.2"/>
</dbReference>
<dbReference type="UCSC" id="uc002hyx.3">
    <molecule id="Q92830-1"/>
    <property type="organism name" value="human"/>
</dbReference>
<dbReference type="AGR" id="HGNC:4201"/>
<dbReference type="CTD" id="2648"/>
<dbReference type="DisGeNET" id="2648"/>
<dbReference type="GeneCards" id="KAT2A"/>
<dbReference type="HGNC" id="HGNC:4201">
    <property type="gene designation" value="KAT2A"/>
</dbReference>
<dbReference type="HPA" id="ENSG00000108773">
    <property type="expression patterns" value="Low tissue specificity"/>
</dbReference>
<dbReference type="MIM" id="602301">
    <property type="type" value="gene"/>
</dbReference>
<dbReference type="neXtProt" id="NX_Q92830"/>
<dbReference type="OpenTargets" id="ENSG00000108773"/>
<dbReference type="PharmGKB" id="PA162392664"/>
<dbReference type="VEuPathDB" id="HostDB:ENSG00000108773"/>
<dbReference type="eggNOG" id="KOG1472">
    <property type="taxonomic scope" value="Eukaryota"/>
</dbReference>
<dbReference type="GeneTree" id="ENSGT00940000158799"/>
<dbReference type="HOGENOM" id="CLU_015901_0_0_1"/>
<dbReference type="InParanoid" id="Q92830"/>
<dbReference type="OMA" id="AKYYVHE"/>
<dbReference type="OrthoDB" id="1937912at2759"/>
<dbReference type="PAN-GO" id="Q92830">
    <property type="GO annotations" value="5 GO annotations based on evolutionary models"/>
</dbReference>
<dbReference type="PhylomeDB" id="Q92830"/>
<dbReference type="TreeFam" id="TF105399"/>
<dbReference type="BRENDA" id="2.3.1.48">
    <property type="organism ID" value="2681"/>
</dbReference>
<dbReference type="PathwayCommons" id="Q92830"/>
<dbReference type="Reactome" id="R-HSA-1912408">
    <property type="pathway name" value="Pre-NOTCH Transcription and Translation"/>
</dbReference>
<dbReference type="Reactome" id="R-HSA-210744">
    <property type="pathway name" value="Regulation of gene expression in late stage (branching morphogenesis) pancreatic bud precursor cells"/>
</dbReference>
<dbReference type="Reactome" id="R-HSA-2122947">
    <property type="pathway name" value="NOTCH1 Intracellular Domain Regulates Transcription"/>
</dbReference>
<dbReference type="Reactome" id="R-HSA-2644606">
    <property type="pathway name" value="Constitutive Signaling by NOTCH1 PEST Domain Mutants"/>
</dbReference>
<dbReference type="Reactome" id="R-HSA-2894862">
    <property type="pathway name" value="Constitutive Signaling by NOTCH1 HD+PEST Domain Mutants"/>
</dbReference>
<dbReference type="Reactome" id="R-HSA-3214847">
    <property type="pathway name" value="HATs acetylate histones"/>
</dbReference>
<dbReference type="Reactome" id="R-HSA-350054">
    <property type="pathway name" value="Notch-HLH transcription pathway"/>
</dbReference>
<dbReference type="Reactome" id="R-HSA-5250924">
    <property type="pathway name" value="B-WICH complex positively regulates rRNA expression"/>
</dbReference>
<dbReference type="Reactome" id="R-HSA-5689880">
    <property type="pathway name" value="Ub-specific processing proteases"/>
</dbReference>
<dbReference type="Reactome" id="R-HSA-73762">
    <property type="pathway name" value="RNA Polymerase I Transcription Initiation"/>
</dbReference>
<dbReference type="Reactome" id="R-HSA-8941856">
    <property type="pathway name" value="RUNX3 regulates NOTCH signaling"/>
</dbReference>
<dbReference type="Reactome" id="R-HSA-9013508">
    <property type="pathway name" value="NOTCH3 Intracellular Domain Regulates Transcription"/>
</dbReference>
<dbReference type="Reactome" id="R-HSA-9013695">
    <property type="pathway name" value="NOTCH4 Intracellular Domain Regulates Transcription"/>
</dbReference>
<dbReference type="Reactome" id="R-HSA-9733709">
    <property type="pathway name" value="Cardiogenesis"/>
</dbReference>
<dbReference type="Reactome" id="R-HSA-9772755">
    <property type="pathway name" value="Formation of WDR5-containing histone-modifying complexes"/>
</dbReference>
<dbReference type="Reactome" id="R-HSA-9793380">
    <property type="pathway name" value="Formation of paraxial mesoderm"/>
</dbReference>
<dbReference type="SignaLink" id="Q92830"/>
<dbReference type="SIGNOR" id="Q92830"/>
<dbReference type="BioGRID-ORCS" id="2648">
    <property type="hits" value="121 hits in 1176 CRISPR screens"/>
</dbReference>
<dbReference type="ChiTaRS" id="KAT2A">
    <property type="organism name" value="human"/>
</dbReference>
<dbReference type="EvolutionaryTrace" id="Q92830"/>
<dbReference type="GeneWiki" id="GCN5L2"/>
<dbReference type="GenomeRNAi" id="2648"/>
<dbReference type="Pharos" id="Q92830">
    <property type="development level" value="Tchem"/>
</dbReference>
<dbReference type="PRO" id="PR:Q92830"/>
<dbReference type="Proteomes" id="UP000005640">
    <property type="component" value="Chromosome 17"/>
</dbReference>
<dbReference type="RNAct" id="Q92830">
    <property type="molecule type" value="protein"/>
</dbReference>
<dbReference type="Bgee" id="ENSG00000108773">
    <property type="expression patterns" value="Expressed in right uterine tube and 186 other cell types or tissues"/>
</dbReference>
<dbReference type="ExpressionAtlas" id="Q92830">
    <property type="expression patterns" value="baseline and differential"/>
</dbReference>
<dbReference type="GO" id="GO:0140672">
    <property type="term" value="C:ATAC complex"/>
    <property type="evidence" value="ECO:0000314"/>
    <property type="project" value="BHF-UCL"/>
</dbReference>
<dbReference type="GO" id="GO:0005813">
    <property type="term" value="C:centrosome"/>
    <property type="evidence" value="ECO:0000314"/>
    <property type="project" value="UniProtKB"/>
</dbReference>
<dbReference type="GO" id="GO:0005737">
    <property type="term" value="C:cytoplasm"/>
    <property type="evidence" value="ECO:0007669"/>
    <property type="project" value="UniProtKB-KW"/>
</dbReference>
<dbReference type="GO" id="GO:0005615">
    <property type="term" value="C:extracellular space"/>
    <property type="evidence" value="ECO:0007005"/>
    <property type="project" value="UniProtKB"/>
</dbReference>
<dbReference type="GO" id="GO:0000123">
    <property type="term" value="C:histone acetyltransferase complex"/>
    <property type="evidence" value="ECO:0000314"/>
    <property type="project" value="UniProtKB"/>
</dbReference>
<dbReference type="GO" id="GO:0072686">
    <property type="term" value="C:mitotic spindle"/>
    <property type="evidence" value="ECO:0000303"/>
    <property type="project" value="ComplexPortal"/>
</dbReference>
<dbReference type="GO" id="GO:0005654">
    <property type="term" value="C:nucleoplasm"/>
    <property type="evidence" value="ECO:0000304"/>
    <property type="project" value="Reactome"/>
</dbReference>
<dbReference type="GO" id="GO:0005634">
    <property type="term" value="C:nucleus"/>
    <property type="evidence" value="ECO:0000314"/>
    <property type="project" value="UniProtKB"/>
</dbReference>
<dbReference type="GO" id="GO:0000124">
    <property type="term" value="C:SAGA complex"/>
    <property type="evidence" value="ECO:0000314"/>
    <property type="project" value="UniProtKB"/>
</dbReference>
<dbReference type="GO" id="GO:0033276">
    <property type="term" value="C:transcription factor TFTC complex"/>
    <property type="evidence" value="ECO:0000314"/>
    <property type="project" value="UniProtKB"/>
</dbReference>
<dbReference type="GO" id="GO:0003682">
    <property type="term" value="F:chromatin binding"/>
    <property type="evidence" value="ECO:0000314"/>
    <property type="project" value="UniProtKB"/>
</dbReference>
<dbReference type="GO" id="GO:0140297">
    <property type="term" value="F:DNA-binding transcription factor binding"/>
    <property type="evidence" value="ECO:0000353"/>
    <property type="project" value="UniProtKB"/>
</dbReference>
<dbReference type="GO" id="GO:0004402">
    <property type="term" value="F:histone acetyltransferase activity"/>
    <property type="evidence" value="ECO:0000314"/>
    <property type="project" value="UniProtKB"/>
</dbReference>
<dbReference type="GO" id="GO:0042826">
    <property type="term" value="F:histone deacetylase binding"/>
    <property type="evidence" value="ECO:0000353"/>
    <property type="project" value="UniProtKB"/>
</dbReference>
<dbReference type="GO" id="GO:0106229">
    <property type="term" value="F:histone glutaryltransferase activity"/>
    <property type="evidence" value="ECO:0000314"/>
    <property type="project" value="UniProtKB"/>
</dbReference>
<dbReference type="GO" id="GO:0010484">
    <property type="term" value="F:histone H3 acetyltransferase activity"/>
    <property type="evidence" value="ECO:0000314"/>
    <property type="project" value="BHF-UCL"/>
</dbReference>
<dbReference type="GO" id="GO:0043993">
    <property type="term" value="F:histone H3K18 acetyltransferase activity"/>
    <property type="evidence" value="ECO:0007669"/>
    <property type="project" value="Ensembl"/>
</dbReference>
<dbReference type="GO" id="GO:0043992">
    <property type="term" value="F:histone H3K9 acetyltransferase activity"/>
    <property type="evidence" value="ECO:0000314"/>
    <property type="project" value="UniProtKB"/>
</dbReference>
<dbReference type="GO" id="GO:0043997">
    <property type="term" value="F:histone H4K12 acetyltransferase activity"/>
    <property type="evidence" value="ECO:0007669"/>
    <property type="project" value="Ensembl"/>
</dbReference>
<dbReference type="GO" id="GO:0106078">
    <property type="term" value="F:histone succinyltransferase activity"/>
    <property type="evidence" value="ECO:0000314"/>
    <property type="project" value="UniProtKB"/>
</dbReference>
<dbReference type="GO" id="GO:0019903">
    <property type="term" value="F:protein phosphatase binding"/>
    <property type="evidence" value="ECO:0007669"/>
    <property type="project" value="Ensembl"/>
</dbReference>
<dbReference type="GO" id="GO:0061733">
    <property type="term" value="F:protein-lysine-acetyltransferase activity"/>
    <property type="evidence" value="ECO:0000314"/>
    <property type="project" value="UniProtKB"/>
</dbReference>
<dbReference type="GO" id="GO:0003713">
    <property type="term" value="F:transcription coactivator activity"/>
    <property type="evidence" value="ECO:0000314"/>
    <property type="project" value="UniProtKB"/>
</dbReference>
<dbReference type="GO" id="GO:1990090">
    <property type="term" value="P:cellular response to nerve growth factor stimulus"/>
    <property type="evidence" value="ECO:0007669"/>
    <property type="project" value="Ensembl"/>
</dbReference>
<dbReference type="GO" id="GO:0071356">
    <property type="term" value="P:cellular response to tumor necrosis factor"/>
    <property type="evidence" value="ECO:0007669"/>
    <property type="project" value="Ensembl"/>
</dbReference>
<dbReference type="GO" id="GO:0006338">
    <property type="term" value="P:chromatin remodeling"/>
    <property type="evidence" value="ECO:0000318"/>
    <property type="project" value="GO_Central"/>
</dbReference>
<dbReference type="GO" id="GO:0048144">
    <property type="term" value="P:fibroblast proliferation"/>
    <property type="evidence" value="ECO:0007669"/>
    <property type="project" value="Ensembl"/>
</dbReference>
<dbReference type="GO" id="GO:0006094">
    <property type="term" value="P:gluconeogenesis"/>
    <property type="evidence" value="ECO:0007669"/>
    <property type="project" value="Ensembl"/>
</dbReference>
<dbReference type="GO" id="GO:0007507">
    <property type="term" value="P:heart development"/>
    <property type="evidence" value="ECO:0000250"/>
    <property type="project" value="UniProtKB"/>
</dbReference>
<dbReference type="GO" id="GO:0001701">
    <property type="term" value="P:in utero embryonic development"/>
    <property type="evidence" value="ECO:0007669"/>
    <property type="project" value="Ensembl"/>
</dbReference>
<dbReference type="GO" id="GO:0018393">
    <property type="term" value="P:internal peptidyl-lysine acetylation"/>
    <property type="evidence" value="ECO:0000314"/>
    <property type="project" value="UniProtKB"/>
</dbReference>
<dbReference type="GO" id="GO:0048312">
    <property type="term" value="P:intracellular distribution of mitochondria"/>
    <property type="evidence" value="ECO:0007669"/>
    <property type="project" value="Ensembl"/>
</dbReference>
<dbReference type="GO" id="GO:0060173">
    <property type="term" value="P:limb development"/>
    <property type="evidence" value="ECO:0000250"/>
    <property type="project" value="UniProtKB"/>
</dbReference>
<dbReference type="GO" id="GO:0007616">
    <property type="term" value="P:long-term memory"/>
    <property type="evidence" value="ECO:0000250"/>
    <property type="project" value="UniProtKB"/>
</dbReference>
<dbReference type="GO" id="GO:0022037">
    <property type="term" value="P:metencephalon development"/>
    <property type="evidence" value="ECO:0007669"/>
    <property type="project" value="Ensembl"/>
</dbReference>
<dbReference type="GO" id="GO:0030901">
    <property type="term" value="P:midbrain development"/>
    <property type="evidence" value="ECO:0007669"/>
    <property type="project" value="Ensembl"/>
</dbReference>
<dbReference type="GO" id="GO:0035264">
    <property type="term" value="P:multicellular organism growth"/>
    <property type="evidence" value="ECO:0007669"/>
    <property type="project" value="Ensembl"/>
</dbReference>
<dbReference type="GO" id="GO:0046600">
    <property type="term" value="P:negative regulation of centriole replication"/>
    <property type="evidence" value="ECO:0000314"/>
    <property type="project" value="UniProtKB"/>
</dbReference>
<dbReference type="GO" id="GO:0045721">
    <property type="term" value="P:negative regulation of gluconeogenesis"/>
    <property type="evidence" value="ECO:0000314"/>
    <property type="project" value="UniProt"/>
</dbReference>
<dbReference type="GO" id="GO:0000122">
    <property type="term" value="P:negative regulation of transcription by RNA polymerase II"/>
    <property type="evidence" value="ECO:0000314"/>
    <property type="project" value="BHF-UCL"/>
</dbReference>
<dbReference type="GO" id="GO:0001843">
    <property type="term" value="P:neural tube closure"/>
    <property type="evidence" value="ECO:0007669"/>
    <property type="project" value="Ensembl"/>
</dbReference>
<dbReference type="GO" id="GO:0106227">
    <property type="term" value="P:peptidyl-lysine glutarylation"/>
    <property type="evidence" value="ECO:0000314"/>
    <property type="project" value="UniProtKB"/>
</dbReference>
<dbReference type="GO" id="GO:2000727">
    <property type="term" value="P:positive regulation of cardiac muscle cell differentiation"/>
    <property type="evidence" value="ECO:0007669"/>
    <property type="project" value="Ensembl"/>
</dbReference>
<dbReference type="GO" id="GO:0031346">
    <property type="term" value="P:positive regulation of cell projection organization"/>
    <property type="evidence" value="ECO:0007669"/>
    <property type="project" value="Ensembl"/>
</dbReference>
<dbReference type="GO" id="GO:0001819">
    <property type="term" value="P:positive regulation of cytokine production"/>
    <property type="evidence" value="ECO:0000250"/>
    <property type="project" value="UniProtKB"/>
</dbReference>
<dbReference type="GO" id="GO:0045893">
    <property type="term" value="P:positive regulation of DNA-templated transcription"/>
    <property type="evidence" value="ECO:0000314"/>
    <property type="project" value="UniProtKB"/>
</dbReference>
<dbReference type="GO" id="GO:0045722">
    <property type="term" value="P:positive regulation of gluconeogenesis"/>
    <property type="evidence" value="ECO:0007669"/>
    <property type="project" value="Ensembl"/>
</dbReference>
<dbReference type="GO" id="GO:0045944">
    <property type="term" value="P:positive regulation of transcription by RNA polymerase II"/>
    <property type="evidence" value="ECO:0000314"/>
    <property type="project" value="UniProtKB"/>
</dbReference>
<dbReference type="GO" id="GO:1903010">
    <property type="term" value="P:regulation of bone development"/>
    <property type="evidence" value="ECO:0000250"/>
    <property type="project" value="UniProtKB"/>
</dbReference>
<dbReference type="GO" id="GO:0061035">
    <property type="term" value="P:regulation of cartilage development"/>
    <property type="evidence" value="ECO:0000250"/>
    <property type="project" value="UniProtKB"/>
</dbReference>
<dbReference type="GO" id="GO:0051726">
    <property type="term" value="P:regulation of cell cycle"/>
    <property type="evidence" value="ECO:0000315"/>
    <property type="project" value="ComplexPortal"/>
</dbReference>
<dbReference type="GO" id="GO:0051302">
    <property type="term" value="P:regulation of cell division"/>
    <property type="evidence" value="ECO:0000314"/>
    <property type="project" value="ComplexPortal"/>
</dbReference>
<dbReference type="GO" id="GO:0006282">
    <property type="term" value="P:regulation of DNA repair"/>
    <property type="evidence" value="ECO:0000303"/>
    <property type="project" value="ComplexPortal"/>
</dbReference>
<dbReference type="GO" id="GO:0006355">
    <property type="term" value="P:regulation of DNA-templated transcription"/>
    <property type="evidence" value="ECO:0000315"/>
    <property type="project" value="ComplexPortal"/>
</dbReference>
<dbReference type="GO" id="GO:0045995">
    <property type="term" value="P:regulation of embryonic development"/>
    <property type="evidence" value="ECO:0000266"/>
    <property type="project" value="ComplexPortal"/>
</dbReference>
<dbReference type="GO" id="GO:0031647">
    <property type="term" value="P:regulation of protein stability"/>
    <property type="evidence" value="ECO:0000315"/>
    <property type="project" value="MGI"/>
</dbReference>
<dbReference type="GO" id="GO:0045589">
    <property type="term" value="P:regulation of regulatory T cell differentiation"/>
    <property type="evidence" value="ECO:0000250"/>
    <property type="project" value="UniProtKB"/>
</dbReference>
<dbReference type="GO" id="GO:0043484">
    <property type="term" value="P:regulation of RNA splicing"/>
    <property type="evidence" value="ECO:0000303"/>
    <property type="project" value="ComplexPortal"/>
</dbReference>
<dbReference type="GO" id="GO:2000036">
    <property type="term" value="P:regulation of stem cell population maintenance"/>
    <property type="evidence" value="ECO:0000250"/>
    <property type="project" value="UniProtKB"/>
</dbReference>
<dbReference type="GO" id="GO:0048167">
    <property type="term" value="P:regulation of synaptic plasticity"/>
    <property type="evidence" value="ECO:0000250"/>
    <property type="project" value="UniProtKB"/>
</dbReference>
<dbReference type="GO" id="GO:0050863">
    <property type="term" value="P:regulation of T cell activation"/>
    <property type="evidence" value="ECO:0000250"/>
    <property type="project" value="UniProtKB"/>
</dbReference>
<dbReference type="GO" id="GO:0006357">
    <property type="term" value="P:regulation of transcription by RNA polymerase II"/>
    <property type="evidence" value="ECO:0000314"/>
    <property type="project" value="ComplexPortal"/>
</dbReference>
<dbReference type="GO" id="GO:0031667">
    <property type="term" value="P:response to nutrient levels"/>
    <property type="evidence" value="ECO:0007669"/>
    <property type="project" value="Ensembl"/>
</dbReference>
<dbReference type="GO" id="GO:0001756">
    <property type="term" value="P:somitogenesis"/>
    <property type="evidence" value="ECO:0007669"/>
    <property type="project" value="Ensembl"/>
</dbReference>
<dbReference type="GO" id="GO:0021537">
    <property type="term" value="P:telencephalon development"/>
    <property type="evidence" value="ECO:0007669"/>
    <property type="project" value="Ensembl"/>
</dbReference>
<dbReference type="CDD" id="cd05509">
    <property type="entry name" value="Bromo_gcn5_like"/>
    <property type="match status" value="1"/>
</dbReference>
<dbReference type="CDD" id="cd04301">
    <property type="entry name" value="NAT_SF"/>
    <property type="match status" value="1"/>
</dbReference>
<dbReference type="FunFam" id="3.40.630.30:FF:000004">
    <property type="entry name" value="Histone acetyltransferase KAT2A"/>
    <property type="match status" value="1"/>
</dbReference>
<dbReference type="FunFam" id="1.20.920.10:FF:000014">
    <property type="entry name" value="Histone acetyltransferase KAT2B"/>
    <property type="match status" value="1"/>
</dbReference>
<dbReference type="Gene3D" id="3.40.630.30">
    <property type="match status" value="1"/>
</dbReference>
<dbReference type="Gene3D" id="1.20.920.10">
    <property type="entry name" value="Bromodomain-like"/>
    <property type="match status" value="1"/>
</dbReference>
<dbReference type="InterPro" id="IPR016181">
    <property type="entry name" value="Acyl_CoA_acyltransferase"/>
</dbReference>
<dbReference type="InterPro" id="IPR001487">
    <property type="entry name" value="Bromodomain"/>
</dbReference>
<dbReference type="InterPro" id="IPR036427">
    <property type="entry name" value="Bromodomain-like_sf"/>
</dbReference>
<dbReference type="InterPro" id="IPR018359">
    <property type="entry name" value="Bromodomain_CS"/>
</dbReference>
<dbReference type="InterPro" id="IPR037800">
    <property type="entry name" value="GCN5"/>
</dbReference>
<dbReference type="InterPro" id="IPR016376">
    <property type="entry name" value="GCN5/PCAF"/>
</dbReference>
<dbReference type="InterPro" id="IPR000182">
    <property type="entry name" value="GNAT_dom"/>
</dbReference>
<dbReference type="InterPro" id="IPR009464">
    <property type="entry name" value="PCAF_N"/>
</dbReference>
<dbReference type="PANTHER" id="PTHR45750">
    <property type="entry name" value="GH11602P"/>
    <property type="match status" value="1"/>
</dbReference>
<dbReference type="PANTHER" id="PTHR45750:SF1">
    <property type="entry name" value="HISTONE ACETYLTRANSFERASE KAT2A"/>
    <property type="match status" value="1"/>
</dbReference>
<dbReference type="Pfam" id="PF00583">
    <property type="entry name" value="Acetyltransf_1"/>
    <property type="match status" value="1"/>
</dbReference>
<dbReference type="Pfam" id="PF00439">
    <property type="entry name" value="Bromodomain"/>
    <property type="match status" value="1"/>
</dbReference>
<dbReference type="Pfam" id="PF06466">
    <property type="entry name" value="PCAF_N"/>
    <property type="match status" value="1"/>
</dbReference>
<dbReference type="PIRSF" id="PIRSF003048">
    <property type="entry name" value="Histone_acetylase_PCAF"/>
    <property type="match status" value="1"/>
</dbReference>
<dbReference type="PRINTS" id="PR00503">
    <property type="entry name" value="BROMODOMAIN"/>
</dbReference>
<dbReference type="SMART" id="SM00297">
    <property type="entry name" value="BROMO"/>
    <property type="match status" value="1"/>
</dbReference>
<dbReference type="SUPFAM" id="SSF55729">
    <property type="entry name" value="Acyl-CoA N-acyltransferases (Nat)"/>
    <property type="match status" value="1"/>
</dbReference>
<dbReference type="SUPFAM" id="SSF47370">
    <property type="entry name" value="Bromodomain"/>
    <property type="match status" value="1"/>
</dbReference>
<dbReference type="PROSITE" id="PS00633">
    <property type="entry name" value="BROMODOMAIN_1"/>
    <property type="match status" value="1"/>
</dbReference>
<dbReference type="PROSITE" id="PS50014">
    <property type="entry name" value="BROMODOMAIN_2"/>
    <property type="match status" value="1"/>
</dbReference>
<dbReference type="PROSITE" id="PS51186">
    <property type="entry name" value="GNAT"/>
    <property type="match status" value="1"/>
</dbReference>
<accession>Q92830</accession>
<accession>Q8N1A2</accession>
<accession>Q9UCW1</accession>
<comment type="function">
    <text evidence="1 11 12 15 16 17 20 21 22 23 26 27 28 29">Protein lysine acyltransferase that can act as a acetyltransferase, glutaryltransferase, succinyltransferase or malonyltransferase, depending on the context (PubMed:29211711, PubMed:35995428). Acts as a histone lysine succinyltransferase: catalyzes succinylation of histone H3 on 'Lys-79' (H3K79succ), with a maximum frequency around the transcription start sites of genes (PubMed:29211711). Succinylation of histones gives a specific tag for epigenetic transcription activation (PubMed:29211711). Association with the 2-oxoglutarate dehydrogenase complex, which provides succinyl-CoA, is required for histone succinylation (PubMed:29211711). In different complexes, functions either as an acetyltransferase (HAT) or as a succinyltransferase: in the SAGA and ATAC complexes, acts as a histone acetyltransferase (PubMed:17301242, PubMed:19103755, PubMed:29211711). Has significant histone acetyltransferase activity with core histones, but not with nucleosome core particles (PubMed:17301242, PubMed:19103755, PubMed:21131905). Has a a strong preference for acetylation of H3 at 'Lys-9' (H3K9ac) (PubMed:21131905). Acetylation of histones gives a specific tag for epigenetic transcription activation (PubMed:17301242, PubMed:19103755, PubMed:29211711). Recruited by the XPC complex at promoters, where it specifically mediates acetylation of histone variant H2A.Z.1/H2A.Z, thereby promoting expression of target genes (PubMed:29973595, PubMed:31527837). Involved in long-term memory consolidation and synaptic plasticity: acts by promoting expression of a hippocampal gene expression network linked to neuroactive receptor signaling (By similarity). Acts as a positive regulator of T-cell activation: upon TCR stimulation, recruited to the IL2 promoter following interaction with NFATC2 and catalyzes acetylation of histone H3 at 'Lys-9' (H3K9ac), leading to promote IL2 expression (By similarity). Required for growth and differentiation of craniofacial cartilage and bone by regulating acetylation of histone H3 at 'Lys-9' (H3K9ac) (By similarity). Regulates embryonic stem cell (ESC) pluripotency and differentiation (By similarity). Also acetylates non-histone proteins, such as CEBPB, MRE11, PPARGC1A, PLK4 and TBX5 (PubMed:16753578, PubMed:17301242, PubMed:27796307, PubMed:29174768, PubMed:38128537). Involved in heart and limb development by mediating acetylation of TBX5, acetylation regulating nucleocytoplasmic shuttling of TBX5 (PubMed:29174768). Acts as a negative regulator of centrosome amplification by mediating acetylation of PLK4 (PubMed:27796307). Acts as a negative regulator of gluconeogenesis by mediating acetylation and subsequent inactivation of PPARGC1A (PubMed:16753578, PubMed:23142079). Also acts as a histone glutaryltransferase: catalyzes glutarylation of histone H4 on 'Lys-91' (H4K91glu), a mark that destabilizes nucleosomes by promoting dissociation of the H2A-H2B dimers from nucleosomes (PubMed:31542297).</text>
</comment>
<comment type="function">
    <text evidence="7">(Microbial infection) In case of HIV-1 infection, it is recruited by the viral protein Tat. Regulates Tat's transactivating activity and may help inducing chromatin remodeling of proviral genes.</text>
</comment>
<comment type="catalytic activity">
    <reaction evidence="16 19 22 26">
        <text>L-lysyl-[histone] + acetyl-CoA = N(6)-acetyl-L-lysyl-[histone] + CoA + H(+)</text>
        <dbReference type="Rhea" id="RHEA:21992"/>
        <dbReference type="Rhea" id="RHEA-COMP:9845"/>
        <dbReference type="Rhea" id="RHEA-COMP:11338"/>
        <dbReference type="ChEBI" id="CHEBI:15378"/>
        <dbReference type="ChEBI" id="CHEBI:29969"/>
        <dbReference type="ChEBI" id="CHEBI:57287"/>
        <dbReference type="ChEBI" id="CHEBI:57288"/>
        <dbReference type="ChEBI" id="CHEBI:61930"/>
        <dbReference type="EC" id="2.3.1.48"/>
    </reaction>
    <physiologicalReaction direction="left-to-right" evidence="16 19 22 26">
        <dbReference type="Rhea" id="RHEA:21993"/>
    </physiologicalReaction>
</comment>
<comment type="catalytic activity">
    <reaction evidence="11 12 17 20 21 28 29">
        <text>L-lysyl-[protein] + acetyl-CoA = N(6)-acetyl-L-lysyl-[protein] + CoA + H(+)</text>
        <dbReference type="Rhea" id="RHEA:45948"/>
        <dbReference type="Rhea" id="RHEA-COMP:9752"/>
        <dbReference type="Rhea" id="RHEA-COMP:10731"/>
        <dbReference type="ChEBI" id="CHEBI:15378"/>
        <dbReference type="ChEBI" id="CHEBI:29969"/>
        <dbReference type="ChEBI" id="CHEBI:57287"/>
        <dbReference type="ChEBI" id="CHEBI:57288"/>
        <dbReference type="ChEBI" id="CHEBI:61930"/>
    </reaction>
</comment>
<comment type="catalytic activity">
    <reaction evidence="22">
        <text>succinyl-CoA + L-lysyl-[protein] = N(6)-succinyl-L-lysyl-[protein] + CoA + H(+)</text>
        <dbReference type="Rhea" id="RHEA:16261"/>
        <dbReference type="Rhea" id="RHEA-COMP:9752"/>
        <dbReference type="Rhea" id="RHEA-COMP:11877"/>
        <dbReference type="ChEBI" id="CHEBI:15378"/>
        <dbReference type="ChEBI" id="CHEBI:29969"/>
        <dbReference type="ChEBI" id="CHEBI:57287"/>
        <dbReference type="ChEBI" id="CHEBI:57292"/>
        <dbReference type="ChEBI" id="CHEBI:87830"/>
    </reaction>
</comment>
<comment type="catalytic activity">
    <reaction evidence="27">
        <text>glutaryl-CoA + L-lysyl-[protein] = N(6)-glutaryl-L-lysyl-[protein] + CoA + H(+)</text>
        <dbReference type="Rhea" id="RHEA:18009"/>
        <dbReference type="Rhea" id="RHEA-COMP:9752"/>
        <dbReference type="Rhea" id="RHEA-COMP:11875"/>
        <dbReference type="ChEBI" id="CHEBI:15378"/>
        <dbReference type="ChEBI" id="CHEBI:29969"/>
        <dbReference type="ChEBI" id="CHEBI:57287"/>
        <dbReference type="ChEBI" id="CHEBI:57378"/>
        <dbReference type="ChEBI" id="CHEBI:87828"/>
    </reaction>
    <physiologicalReaction direction="left-to-right" evidence="27">
        <dbReference type="Rhea" id="RHEA:18010"/>
    </physiologicalReaction>
</comment>
<comment type="biophysicochemical properties">
    <kinetics>
        <KM evidence="22">0.83 uM for acetyl-CoA</KM>
        <KM evidence="19">0.91 uM for acetyl-CoA</KM>
        <KM evidence="22">0.36 uM for succinyl-CoA</KM>
        <KM evidence="28">5.9 uM for acetyl-CoA (in the presence of H3K9 peptide)</KM>
        <KM evidence="28">45.1 uM for malonyl-CoA (in the presence of H3K9 peptide)</KM>
    </kinetics>
</comment>
<comment type="subunit">
    <text evidence="1 5 6 8 10 12 14 15 20 21 22 23 24 25 26">Homooligomer; may form a tetramer of homodimers (PubMed:30109122). Interacts with EP300, CREBBP and ADA2. Component of the TFTC-HAT complex, at least composed of TAF5L, TAF6L, TAF3, TADA3L, SUPT3H/SPT3, TAF2/TAFII150, TAF4/TAFII135, TAF5/TAFII100, KAT2A/GCN5L2, TAF10 and TRRAP (PubMed:10373431, PubMed:10611234, PubMed:11438666). Component of the STAGA transcription coactivator-HAT complex, at least composed of SUPT3H, KAT2A, SUPT7L, TAF5L, TAF6L, TADA3L, TAD1L, TAF10, TAF12, TRRAP and TAF9 (PubMed:18206972). The STAGA core complex is associated with a subcomplex required for histone deubiquitination composed of ATXN7L3, ENY2 and USP22 (PubMed:18206972). Component of the ADA2A-containing complex (ATAC), composed of KAT14, KAT2A, TADA2L, TADA3L, ZZ3, MBIP, WDR5, YEATS2, CCDC101 and DR1 (PubMed:19103755). In the complex, it probably interacts directly with KAT14, MBIP and WDR5 (PubMed:19103755). Interacts with PML (By similarity). Interacts with CEBPB (PubMed:17301242). Interacts with TACC1, TACC2 and TACC3 (PubMed:14767476). Interacts with RELA (By similarity). Interacts with NFATC2 (By similarity). Interacts with TBX5 (PubMed:29174768). Interacts with PLK4 (PubMed:27796307). Associates with the 2-oxoglutarate dehydrogenase complex (PubMed:29211711). Interacts with XPC; leading to KAT2A recruitment to promoters and subsequent acetylation of histones (PubMed:29973595, PubMed:31527837). Interacts with ERCC3/XPB; leading to KAT2A recruitment to promoters and subsequent acetylation of histones (PubMed:30894545). Interacts with ISL1. Interactions of ISL1 with MLIP1 or KAT2A may be mutually exclusive (By similarity).</text>
</comment>
<comment type="subunit">
    <text evidence="7">(Microbial infection) Interacts with and acetylates HIV-1 Tat.</text>
</comment>
<comment type="interaction">
    <interactant intactId="EBI-477622">
        <id>Q92830</id>
    </interactant>
    <interactant intactId="EBI-372428">
        <id>Q9NY61</id>
        <label>AATF</label>
    </interactant>
    <organismsDiffer>false</organismsDiffer>
    <experiments>4</experiments>
</comment>
<comment type="interaction">
    <interactant intactId="EBI-477622">
        <id>Q92830</id>
    </interactant>
    <interactant intactId="EBI-448924">
        <id>Q01094</id>
        <label>E2F1</label>
    </interactant>
    <organismsDiffer>false</organismsDiffer>
    <experiments>3</experiments>
</comment>
<comment type="interaction">
    <interactant intactId="EBI-477622">
        <id>Q92830</id>
    </interactant>
    <interactant intactId="EBI-742268">
        <id>O75478</id>
        <label>TADA2A</label>
    </interactant>
    <organismsDiffer>false</organismsDiffer>
    <experiments>5</experiments>
</comment>
<comment type="interaction">
    <interactant intactId="EBI-477622">
        <id>Q92830</id>
    </interactant>
    <interactant intactId="EBI-3951691">
        <id>O75717</id>
        <label>WDHD1</label>
    </interactant>
    <organismsDiffer>false</organismsDiffer>
    <experiments>5</experiments>
</comment>
<comment type="interaction">
    <interactant intactId="EBI-477622">
        <id>Q92830</id>
    </interactant>
    <interactant intactId="EBI-2795524">
        <id>Q8IYH5</id>
        <label>ZZZ3</label>
    </interactant>
    <organismsDiffer>false</organismsDiffer>
    <experiments>2</experiments>
</comment>
<comment type="interaction">
    <interactant intactId="EBI-477622">
        <id>Q92830</id>
    </interactant>
    <interactant intactId="EBI-25475856">
        <id>P0DTC9</id>
        <label>N</label>
    </interactant>
    <organismsDiffer>true</organismsDiffer>
    <experiments>2</experiments>
</comment>
<comment type="interaction">
    <interactant intactId="EBI-477622">
        <id>Q92830</id>
    </interactant>
    <interactant intactId="EBI-7602718">
        <id>P59595</id>
        <label>N</label>
    </interactant>
    <organismsDiffer>true</organismsDiffer>
    <experiments>2</experiments>
</comment>
<comment type="subcellular location">
    <subcellularLocation>
        <location evidence="9 18 20 22">Nucleus</location>
    </subcellularLocation>
    <subcellularLocation>
        <location evidence="22">Chromosome</location>
    </subcellularLocation>
    <subcellularLocation>
        <location evidence="20">Cytoplasm</location>
        <location evidence="20">Cytoskeleton</location>
        <location evidence="20">Microtubule organizing center</location>
        <location evidence="20">Centrosome</location>
    </subcellularLocation>
    <text evidence="20">Mainly localizes to the nucleus (PubMed:27796307). Localizes to sites of DNA damage (PubMed:25593309). Also localizes to centrosomes in late G1 and around the G1/S transition, coinciding with the onset of centriole formation (PubMed:27796307).</text>
</comment>
<comment type="alternative products">
    <event type="alternative splicing"/>
    <isoform>
        <id>Q92830-1</id>
        <name>1</name>
        <name>GCN5-L</name>
        <sequence type="displayed"/>
    </isoform>
    <isoform>
        <id>Q92830-2</id>
        <name>2</name>
        <name>GCN5-S</name>
        <sequence type="described" ref="VSP_000556"/>
    </isoform>
</comment>
<comment type="tissue specificity">
    <text evidence="30">Expressed in all tissues tested.</text>
</comment>
<comment type="domain">
    <text evidence="22">Loop3 is required for substrate specificity and adopts different structural conformations in succinyl-CoA-bound and acetyl-CoA-bound forms. Tyr-645 has an important role in the selective binding of succinyl-CoA over acetyl-CoA.</text>
</comment>
<comment type="PTM">
    <text evidence="17">Acetylated at Lys-549, inhibiting the protein acetyltransferase activity (PubMed:23142079). Deacetylation at Lys-549 by SIRT6 promotes phosphorylation at Ser-307 and Thr-735 and subsequent activation of the protein acetyltransferase activity, leading to acetylation and inactivation of PPARGC1A (PubMed:23142079).</text>
</comment>
<comment type="similarity">
    <text evidence="35">Belongs to the acetyltransferase family. GCN5 subfamily.</text>
</comment>
<comment type="caution">
    <text evidence="19 22 27">According to a report, has weak protein acyltransferase activity compared to protein acetyltransferase activity (PubMed:27377381). These conclusions are however not supported by subsequent studies (PubMed:29211711, PubMed:31542297).</text>
</comment>
<reference key="1">
    <citation type="journal article" date="1996" name="Mol. Cell. Biol.">
        <title>Identification of human proteins functionally conserved with the yeast putative adaptors ADA2 and GCN5.</title>
        <authorList>
            <person name="Candau R."/>
            <person name="Moore P.A."/>
            <person name="Wang L."/>
            <person name="Barlev N."/>
            <person name="Ying C.Y."/>
            <person name="Rosen C.A."/>
            <person name="Berger S.L."/>
        </authorList>
    </citation>
    <scope>NUCLEOTIDE SEQUENCE [GENOMIC DNA] (ISOFORM 2)</scope>
    <scope>CHARACTERIZATION</scope>
    <source>
        <tissue>Testis</tissue>
    </source>
</reference>
<reference key="2">
    <citation type="journal article" date="1998" name="Nucleic Acids Res.">
        <title>Cloning of Drosophila GCN5: conserved features among metazoan GCN5 family members.</title>
        <authorList>
            <person name="Smith E.R."/>
            <person name="Belote J.M."/>
            <person name="Schlitz R.L."/>
            <person name="Yang X.-J."/>
            <person name="Moore P.A."/>
            <person name="Berger S.L."/>
            <person name="Nakatani Y."/>
            <person name="Allis C.D."/>
        </authorList>
    </citation>
    <scope>NUCLEOTIDE SEQUENCE [GENOMIC DNA / MRNA]</scope>
    <scope>ALTERNATIVE SPLICING</scope>
    <source>
        <tissue>Liver</tissue>
    </source>
</reference>
<reference key="3">
    <citation type="submission" date="2005-07" db="EMBL/GenBank/DDBJ databases">
        <authorList>
            <person name="Mural R.J."/>
            <person name="Istrail S."/>
            <person name="Sutton G.G."/>
            <person name="Florea L."/>
            <person name="Halpern A.L."/>
            <person name="Mobarry C.M."/>
            <person name="Lippert R."/>
            <person name="Walenz B."/>
            <person name="Shatkay H."/>
            <person name="Dew I."/>
            <person name="Miller J.R."/>
            <person name="Flanigan M.J."/>
            <person name="Edwards N.J."/>
            <person name="Bolanos R."/>
            <person name="Fasulo D."/>
            <person name="Halldorsson B.V."/>
            <person name="Hannenhalli S."/>
            <person name="Turner R."/>
            <person name="Yooseph S."/>
            <person name="Lu F."/>
            <person name="Nusskern D.R."/>
            <person name="Shue B.C."/>
            <person name="Zheng X.H."/>
            <person name="Zhong F."/>
            <person name="Delcher A.L."/>
            <person name="Huson D.H."/>
            <person name="Kravitz S.A."/>
            <person name="Mouchard L."/>
            <person name="Reinert K."/>
            <person name="Remington K.A."/>
            <person name="Clark A.G."/>
            <person name="Waterman M.S."/>
            <person name="Eichler E.E."/>
            <person name="Adams M.D."/>
            <person name="Hunkapiller M.W."/>
            <person name="Myers E.W."/>
            <person name="Venter J.C."/>
        </authorList>
    </citation>
    <scope>NUCLEOTIDE SEQUENCE [LARGE SCALE GENOMIC DNA]</scope>
</reference>
<reference key="4">
    <citation type="journal article" date="2004" name="Genome Res.">
        <title>The status, quality, and expansion of the NIH full-length cDNA project: the Mammalian Gene Collection (MGC).</title>
        <authorList>
            <consortium name="The MGC Project Team"/>
        </authorList>
    </citation>
    <scope>NUCLEOTIDE SEQUENCE [LARGE SCALE MRNA]</scope>
    <source>
        <tissue>Eye</tissue>
        <tissue>Skin</tissue>
        <tissue>Testis</tissue>
    </source>
</reference>
<reference key="5">
    <citation type="journal article" date="1996" name="Nature">
        <title>A p300/CBP-associated factor that competes with the adenoviral oncoprotein E1A.</title>
        <authorList>
            <person name="Yang X.-J."/>
            <person name="Ogryzko V.V."/>
            <person name="Nishikawa J."/>
            <person name="Howard B.H."/>
            <person name="Nakatani Y."/>
        </authorList>
    </citation>
    <scope>NUCLEOTIDE SEQUENCE [GENOMIC DNA] OF 362-837 (ISOFORM 1)</scope>
    <scope>TISSUE SPECIFICITY</scope>
    <source>
        <tissue>Brain</tissue>
    </source>
</reference>
<reference key="6">
    <citation type="journal article" date="2001" name="Mol. Cell. Biol.">
        <title>Human STAGA complex is a chromatin-acetylating transcription coactivator that interacts with pre-mRNA splicing and DNA damage-binding factors in vivo.</title>
        <authorList>
            <person name="Martinez E."/>
            <person name="Palhan V.B."/>
            <person name="Tjernberg A."/>
            <person name="Lymar E.S."/>
            <person name="Gamper A.M."/>
            <person name="Kundu T.K."/>
            <person name="Chait B.T."/>
            <person name="Roeder R.G."/>
        </authorList>
    </citation>
    <scope>SUBCELLULAR LOCATION</scope>
    <scope>IDENTIFICATION IN THE STAGA COMPLEX WITH SUPT3H; KIAA0764; TAF5L; TAF6L; TRRAP; TADA3L; TAF10; TAF12 AND TAF9</scope>
    <scope>IDENTIFICATION BY MASS SPECTROMETRY</scope>
</reference>
<reference key="7">
    <citation type="journal article" date="1999" name="J. Biol. Chem.">
        <title>Identification of TATA-binding protein-free TAFII-containing complex subunits suggests a role in nucleosome acetylation and signal transduction.</title>
        <authorList>
            <person name="Brand M."/>
            <person name="Yamamoto K."/>
            <person name="Staub A."/>
            <person name="Tora L."/>
        </authorList>
    </citation>
    <scope>IDENTIFICATION IN THE TFTC-HAT COMPLEX WITH TAF5L; TAF6L; TADA3L; SUPT3H; TAF2; TAF4; TAF5; TRRAP AND TAF10</scope>
</reference>
<reference key="8">
    <citation type="journal article" date="2000" name="Mol. Cell. Biol.">
        <title>The essential cofactor TRRAP recruits the histone acetyltransferase hGCN5 to c-Myc.</title>
        <authorList>
            <person name="McMahon S.B."/>
            <person name="Wood M.A."/>
            <person name="Cole M.D."/>
        </authorList>
    </citation>
    <scope>INTERACTION WITH TRRAP</scope>
</reference>
<reference key="9">
    <citation type="journal article" date="2001" name="J. Biol. Chem.">
        <title>The histone acetyltransferase, hGCN5, interacts with and acetylates the HIV transactivator, Tat.</title>
        <authorList>
            <person name="Col E."/>
            <person name="Caron C."/>
            <person name="Seigneurin-Berny D."/>
            <person name="Gracia J."/>
            <person name="Favier A."/>
            <person name="Khochbin S."/>
        </authorList>
    </citation>
    <scope>FUNCTION (MICROBIAL INFECTION)</scope>
    <scope>INTERACTION WITH HIV-1 TAT</scope>
</reference>
<reference key="10">
    <citation type="journal article" date="2001" name="Mol. Cell. Biol.">
        <title>The TFIID components human TAFII140 and Drosophila BIP2 (TAFII155) are novel metazoan homologues of yeast TAFII47 containing a histone fold and a PHD finger.</title>
        <authorList>
            <person name="Gangloff Y.G."/>
            <person name="Pointud J.-C."/>
            <person name="Thuault S."/>
            <person name="Carre L."/>
            <person name="Romier C."/>
            <person name="Muratoglu S."/>
            <person name="Brand M."/>
            <person name="Tora L."/>
            <person name="Couderc J.-L."/>
            <person name="Davidson I."/>
        </authorList>
    </citation>
    <scope>INTERACTION WITH TAF3</scope>
</reference>
<reference key="11">
    <citation type="journal article" date="2004" name="Oncogene">
        <title>The transforming acidic coiled coil proteins interact with nuclear histone acetyltransferases.</title>
        <authorList>
            <person name="Gangisetty O."/>
            <person name="Lauffart B."/>
            <person name="Sondarva G.V."/>
            <person name="Chelsea D.M."/>
            <person name="Still I.H."/>
        </authorList>
    </citation>
    <scope>INTERACTION WITH TACC1; TACC2 AND TACC3</scope>
</reference>
<reference key="12">
    <citation type="journal article" date="2005" name="Nat. Biotechnol.">
        <title>Immunoaffinity profiling of tyrosine phosphorylation in cancer cells.</title>
        <authorList>
            <person name="Rush J."/>
            <person name="Moritz A."/>
            <person name="Lee K.A."/>
            <person name="Guo A."/>
            <person name="Goss V.L."/>
            <person name="Spek E.J."/>
            <person name="Zhang H."/>
            <person name="Zha X.-M."/>
            <person name="Polakiewicz R.D."/>
            <person name="Comb M.J."/>
        </authorList>
    </citation>
    <scope>IDENTIFICATION BY MASS SPECTROMETRY [LARGE SCALE ANALYSIS]</scope>
</reference>
<reference key="13">
    <citation type="journal article" date="2006" name="Cell Metab.">
        <title>GCN5 acetyltransferase complex controls glucose metabolism through transcriptional repression of PGC-1alpha.</title>
        <authorList>
            <person name="Lerin C."/>
            <person name="Rodgers J.T."/>
            <person name="Kalume D.E."/>
            <person name="Kim S.H."/>
            <person name="Pandey A."/>
            <person name="Puigserver P."/>
        </authorList>
    </citation>
    <scope>FUNCTION</scope>
    <scope>CATALYTIC ACTIVITY</scope>
</reference>
<reference key="14">
    <citation type="journal article" date="2007" name="Proc. Natl. Acad. Sci. U.S.A.">
        <title>Glucocorticoid-stimulated preadipocyte differentiation is mediated through acetylation of C/EBPbeta by GCN5.</title>
        <authorList>
            <person name="Wiper-Bergeron N."/>
            <person name="Salem H.A."/>
            <person name="Tomlinson J.J."/>
            <person name="Wu D."/>
            <person name="Hache R.J."/>
        </authorList>
    </citation>
    <scope>FUNCTION</scope>
    <scope>CATALYTIC ACTIVITY</scope>
    <scope>INTERACTION WITH CEBPB</scope>
</reference>
<reference key="15">
    <citation type="journal article" date="2008" name="Mol. Cell">
        <title>A TFTC/STAGA module mediates histone H2A and H2B deubiquitination, coactivates nuclear receptors, and counteracts heterochromatin silencing.</title>
        <authorList>
            <person name="Zhao Y."/>
            <person name="Lang G."/>
            <person name="Ito S."/>
            <person name="Bonnet J."/>
            <person name="Metzger E."/>
            <person name="Sawatsubashi S."/>
            <person name="Suzuki E."/>
            <person name="Le Guezennec X."/>
            <person name="Stunnenberg H.G."/>
            <person name="Krasnov A."/>
            <person name="Georgieva S.G."/>
            <person name="Schuele R."/>
            <person name="Takeyama K."/>
            <person name="Kato S."/>
            <person name="Tora L."/>
            <person name="Devys D."/>
        </authorList>
    </citation>
    <scope>IDENTIFICATION IN STAGA COMPLEX</scope>
</reference>
<reference key="16">
    <citation type="journal article" date="2009" name="Mol. Cell. Biol.">
        <title>The double-histone-acetyltransferase complex ATAC is essential for mammalian development.</title>
        <authorList>
            <person name="Guelman S."/>
            <person name="Kozuka K."/>
            <person name="Mao Y."/>
            <person name="Pham V."/>
            <person name="Solloway M.J."/>
            <person name="Wang J."/>
            <person name="Wu J."/>
            <person name="Lill J.R."/>
            <person name="Zha J."/>
        </authorList>
    </citation>
    <scope>FUNCTION</scope>
    <scope>IDENTIFICATION IN ATAC COMPLEX</scope>
</reference>
<reference key="17">
    <citation type="journal article" date="2011" name="EMBO J.">
        <title>Distinct roles of GCN5/PCAF-mediated H3K9ac and CBP/p300-mediated H3K18/27ac in nuclear receptor transactivation.</title>
        <authorList>
            <person name="Jin Q."/>
            <person name="Yu L.R."/>
            <person name="Wang L."/>
            <person name="Zhang Z."/>
            <person name="Kasper L.H."/>
            <person name="Lee J.E."/>
            <person name="Wang C."/>
            <person name="Brindle P.K."/>
            <person name="Dent S.Y."/>
            <person name="Ge K."/>
        </authorList>
    </citation>
    <scope>FUNCTION</scope>
    <scope>CATALYTIC ACTIVITY</scope>
</reference>
<reference key="18">
    <citation type="journal article" date="2012" name="Mol. Cell">
        <title>The deacetylase Sirt6 activates the acetyltransferase GCN5 and suppresses hepatic gluconeogenesis.</title>
        <authorList>
            <person name="Dominy J.E. Jr."/>
            <person name="Lee Y."/>
            <person name="Jedrychowski M.P."/>
            <person name="Chim H."/>
            <person name="Jurczak M.J."/>
            <person name="Camporez J.P."/>
            <person name="Ruan H.B."/>
            <person name="Feldman J."/>
            <person name="Pierce K."/>
            <person name="Mostoslavsky R."/>
            <person name="Denu J.M."/>
            <person name="Clish C.B."/>
            <person name="Yang X."/>
            <person name="Shulman G.I."/>
            <person name="Gygi S.P."/>
            <person name="Puigserver P."/>
        </authorList>
    </citation>
    <scope>FUNCTION</scope>
    <scope>CATALYTIC ACTIVITY</scope>
    <scope>ACETYLATION AT LYS-549</scope>
    <scope>PHOSPHORYLATION AT SER-307 AND THR-735</scope>
    <scope>MUTAGENESIS OF SER-307; LYS-549; MET-567; TYR-601; 621-TYR-PHE-622 AND THR-735</scope>
</reference>
<reference key="19">
    <citation type="journal article" date="2012" name="Proc. Natl. Acad. Sci. U.S.A.">
        <title>N-terminal acetylome analyses and functional insights of the N-terminal acetyltransferase NatB.</title>
        <authorList>
            <person name="Van Damme P."/>
            <person name="Lasa M."/>
            <person name="Polevoda B."/>
            <person name="Gazquez C."/>
            <person name="Elosegui-Artola A."/>
            <person name="Kim D.S."/>
            <person name="De Juan-Pardo E."/>
            <person name="Demeyer K."/>
            <person name="Hole K."/>
            <person name="Larrea E."/>
            <person name="Timmerman E."/>
            <person name="Prieto J."/>
            <person name="Arnesen T."/>
            <person name="Sherman F."/>
            <person name="Gevaert K."/>
            <person name="Aldabe R."/>
        </authorList>
    </citation>
    <scope>ACETYLATION [LARGE SCALE ANALYSIS] AT ALA-2</scope>
    <scope>CLEAVAGE OF INITIATOR METHIONINE [LARGE SCALE ANALYSIS]</scope>
    <scope>IDENTIFICATION BY MASS SPECTROMETRY [LARGE SCALE ANALYSIS]</scope>
</reference>
<reference key="20">
    <citation type="journal article" date="2015" name="Genes Dev.">
        <title>Screen identifies bromodomain protein ZMYND8 in chromatin recognition of transcription-associated DNA damage that promotes homologous recombination.</title>
        <authorList>
            <person name="Gong F."/>
            <person name="Chiu L.Y."/>
            <person name="Cox B."/>
            <person name="Aymard F."/>
            <person name="Clouaire T."/>
            <person name="Leung J.W."/>
            <person name="Cammarata M."/>
            <person name="Perez M."/>
            <person name="Agarwal P."/>
            <person name="Brodbelt J.S."/>
            <person name="Legube G."/>
            <person name="Miller K.M."/>
        </authorList>
    </citation>
    <scope>SUBCELLULAR LOCATION</scope>
</reference>
<reference key="21">
    <citation type="journal article" date="2016" name="Nat. Commun.">
        <title>KAT2A/KAT2B-targeted acetylome reveals a role for PLK4 acetylation in preventing centrosome amplification.</title>
        <authorList>
            <person name="Fournier M."/>
            <person name="Orpinell M."/>
            <person name="Grauffel C."/>
            <person name="Scheer E."/>
            <person name="Garnier J.M."/>
            <person name="Ye T."/>
            <person name="Chavant V."/>
            <person name="Joint M."/>
            <person name="Esashi F."/>
            <person name="Dejaegere A."/>
            <person name="Goenczy P."/>
            <person name="Tora L."/>
        </authorList>
    </citation>
    <scope>FUNCTION</scope>
    <scope>CATALYTIC ACTIVITY</scope>
    <scope>ACTIVE SITE</scope>
    <scope>SUBCELLULAR LOCATION</scope>
    <scope>INTERACTION WITH PLK4</scope>
    <scope>MUTAGENESIS OF GLU-575 AND ASP-615</scope>
</reference>
<reference key="22">
    <citation type="journal article" date="2017" name="J. Mol. Cell. Cardiol.">
        <title>Acetylation of TBX5 by KAT2B and KAT2A regulates heart and limb development.</title>
        <authorList>
            <person name="Ghosh T.K."/>
            <person name="Aparicio-Sanchez J.J."/>
            <person name="Buxton S."/>
            <person name="Ketley A."/>
            <person name="Mohamed T."/>
            <person name="Rutland C.S."/>
            <person name="Loughna S."/>
            <person name="Brook J.D."/>
        </authorList>
    </citation>
    <scope>FUNCTION</scope>
    <scope>CATALYTIC ACTIVITY</scope>
    <scope>INTERACTION WITH TBX5</scope>
</reference>
<reference key="23">
    <citation type="journal article" date="2017" name="Nat. Struct. Mol. Biol.">
        <title>Site-specific mapping of the human SUMO proteome reveals co-modification with phosphorylation.</title>
        <authorList>
            <person name="Hendriks I.A."/>
            <person name="Lyon D."/>
            <person name="Young C."/>
            <person name="Jensen L.J."/>
            <person name="Vertegaal A.C."/>
            <person name="Nielsen M.L."/>
        </authorList>
    </citation>
    <scope>SUMOYLATION [LARGE SCALE ANALYSIS] AT LYS-728; LYS-759 AND LYS-791</scope>
    <scope>IDENTIFICATION BY MASS SPECTROMETRY [LARGE SCALE ANALYSIS]</scope>
</reference>
<reference key="24">
    <citation type="journal article" date="2018" name="Cell Discov.">
        <title>Supramolecular assembly of KAT2A with succinyl-CoA for histone succinylation.</title>
        <authorList>
            <person name="Wang Y."/>
            <person name="Guo Y.R."/>
            <person name="Xing D."/>
            <person name="Tao Y.J."/>
            <person name="Lu Z."/>
        </authorList>
    </citation>
    <scope>SUBUNIT</scope>
</reference>
<reference key="25">
    <citation type="journal article" date="2018" name="Nat. Commun.">
        <title>XPC is an RNA polymerase II cofactor recruiting ATAC to promoters by interacting with E2F1.</title>
        <authorList>
            <person name="Bidon B."/>
            <person name="Iltis I."/>
            <person name="Semer M."/>
            <person name="Nagy Z."/>
            <person name="Larnicol A."/>
            <person name="Cribier A."/>
            <person name="Benkirane M."/>
            <person name="Coin F."/>
            <person name="Egly J.M."/>
            <person name="Le May N."/>
        </authorList>
    </citation>
    <scope>FUNCTION</scope>
    <scope>INTERACTION WITH XPC</scope>
</reference>
<reference key="26">
    <citation type="journal article" date="2019" name="Mol. Cell">
        <title>Glutarylation of histone H4 lysine 91 regulates chromatin dynamics.</title>
        <authorList>
            <person name="Bao X."/>
            <person name="Liu Z."/>
            <person name="Zhang W."/>
            <person name="Gladysz K."/>
            <person name="Fung Y.M.E."/>
            <person name="Tian G."/>
            <person name="Xiong Y."/>
            <person name="Wong J.W.H."/>
            <person name="Yuen K.W.Y."/>
            <person name="Li X.D."/>
        </authorList>
    </citation>
    <scope>FUNCTION</scope>
    <scope>CATALYTIC ACTIVITY</scope>
</reference>
<reference key="27">
    <citation type="journal article" date="2019" name="Nat. Chem. Biol.">
        <title>DNA repair complex licenses acetylation of H2A.Z.1 by KAT2A during transcription.</title>
        <authorList>
            <person name="Semer M."/>
            <person name="Bidon B."/>
            <person name="Larnicol A."/>
            <person name="Caliskan G."/>
            <person name="Catez P."/>
            <person name="Egly J.M."/>
            <person name="Coin F."/>
            <person name="Le May N."/>
        </authorList>
    </citation>
    <scope>FUNCTION</scope>
    <scope>CATALYTIC ACTIVITY</scope>
    <scope>ACTIVE SITE</scope>
    <scope>INTERACTION WITH XPC</scope>
    <scope>MUTAGENESIS OF GLU-575 AND ASP-615</scope>
</reference>
<reference key="28">
    <citation type="journal article" date="2019" name="Nat. Commun.">
        <title>Functional interplay between TFIIH and KAT2A regulates higher-order chromatin structure and class II gene expression.</title>
        <authorList>
            <person name="Sandoz J."/>
            <person name="Nagy Z."/>
            <person name="Catez P."/>
            <person name="Caliskan G."/>
            <person name="Geny S."/>
            <person name="Renaud J.B."/>
            <person name="Concordet J.P."/>
            <person name="Poterszman A."/>
            <person name="Tora L."/>
            <person name="Egly J.M."/>
            <person name="Le May N."/>
            <person name="Coin F."/>
        </authorList>
    </citation>
    <scope>INTERACTION WITH ERCC3</scope>
</reference>
<reference key="29">
    <citation type="journal article" date="2022" name="Biochemistry">
        <title>The Acyl-CoA Specificity of Human Lysine Acetyltransferase KAT2A.</title>
        <authorList>
            <person name="Anmangandla A."/>
            <person name="Ren Y."/>
            <person name="Fu Q."/>
            <person name="Zhang S."/>
            <person name="Lin H."/>
        </authorList>
    </citation>
    <scope>FUNCTION</scope>
    <scope>CATALYTIC ACTIVITY</scope>
    <scope>BIOPHYSICOCHEMICAL PROPERTIES</scope>
</reference>
<reference key="30">
    <citation type="journal article" date="2024" name="Cell">
        <title>Metabolic regulation of homologous recombination repair by MRE11 lactylation.</title>
        <authorList>
            <person name="Chen Y."/>
            <person name="Wu J."/>
            <person name="Zhai L."/>
            <person name="Zhang T."/>
            <person name="Yin H."/>
            <person name="Gao H."/>
            <person name="Zhao F."/>
            <person name="Wang Z."/>
            <person name="Yang X."/>
            <person name="Jin M."/>
            <person name="Huang B."/>
            <person name="Ding X."/>
            <person name="Li R."/>
            <person name="Yang J."/>
            <person name="He Y."/>
            <person name="Wang Q."/>
            <person name="Wang W."/>
            <person name="Kloeber J.A."/>
            <person name="Li Y."/>
            <person name="Hao B."/>
            <person name="Zhang Y."/>
            <person name="Wang J."/>
            <person name="Tan M."/>
            <person name="Li K."/>
            <person name="Wang P."/>
            <person name="Lou Z."/>
            <person name="Yuan J."/>
        </authorList>
    </citation>
    <scope>FUNCTION</scope>
    <scope>CATALYTIC ACTIVITY</scope>
</reference>
<reference key="31">
    <citation type="journal article" date="2000" name="J. Mol. Biol.">
        <title>Solution structure and acetyl-lysine binding activity of the GCN5 bromodomain.</title>
        <authorList>
            <person name="Hudson B.P."/>
            <person name="Martinez-Yamout M.A."/>
            <person name="Dyson H.J."/>
            <person name="Wright P.E."/>
        </authorList>
    </citation>
    <scope>STRUCTURE BY NMR OF 730-832</scope>
</reference>
<reference evidence="37" key="32">
    <citation type="journal article" date="2007" name="Proteins">
        <title>Crystal structure of a binary complex between human GCN5 histone acetyltransferase domain and acetyl coenzyme A.</title>
        <authorList>
            <person name="Schuetz A."/>
            <person name="Bernstein G."/>
            <person name="Dong A."/>
            <person name="Antoshenko T."/>
            <person name="Wu H."/>
            <person name="Loppnau P."/>
            <person name="Bochkarev A."/>
            <person name="Plotnikov A.N."/>
        </authorList>
    </citation>
    <scope>X-RAY CRYSTALLOGRAPHY (1.74 ANGSTROMS) OF 497-662 IN COMPLEX WITH ACETYL-COA</scope>
    <scope>ACTIVE SITE</scope>
</reference>
<reference key="33">
    <citation type="journal article" date="2012" name="Cell">
        <title>Histone recognition and large-scale structural analysis of the human bromodomain family.</title>
        <authorList>
            <person name="Filippakopoulos P."/>
            <person name="Picaud S."/>
            <person name="Mangos M."/>
            <person name="Keates T."/>
            <person name="Lambert J.P."/>
            <person name="Barsyte-Lovejoy D."/>
            <person name="Felletar I."/>
            <person name="Volkmer R."/>
            <person name="Muller S."/>
            <person name="Pawson T."/>
            <person name="Gingras A.C."/>
            <person name="Arrowsmith C.H."/>
            <person name="Knapp S."/>
        </authorList>
    </citation>
    <scope>X-RAY CRYSTALLOGRAPHY (2.06 ANGSTROMS) OF 729-837</scope>
</reference>
<reference evidence="38 39" key="34">
    <citation type="journal article" date="2016" name="Acta Crystallogr. D">
        <title>Structural basis for acyl-group discrimination by human Gcn5L2.</title>
        <authorList>
            <person name="Ringel A.E."/>
            <person name="Wolberger C."/>
        </authorList>
    </citation>
    <scope>X-RAY CRYSTALLOGRAPHY (2.00 ANGSTROMS) OF 497-662 IN COMPLEX WITH BUTYRYL-COA AND PROPIONYL-COA</scope>
    <scope>CATALYTIC ACTIVITY</scope>
    <scope>BIOPHYSICOCHEMICAL PROPERTIES</scope>
</reference>
<reference evidence="40 41" key="35">
    <citation type="journal article" date="2017" name="Nature">
        <title>KAT2A coupled with the alpha-KGDH complex acts as a histone H3 succinyltransferase.</title>
        <authorList>
            <person name="Wang Y."/>
            <person name="Guo Y.R."/>
            <person name="Liu K."/>
            <person name="Yin Z."/>
            <person name="Liu R."/>
            <person name="Xia Y."/>
            <person name="Tan L."/>
            <person name="Yang P."/>
            <person name="Lee J.H."/>
            <person name="Li X.J."/>
            <person name="Hawke D."/>
            <person name="Zheng Y."/>
            <person name="Qian X."/>
            <person name="Lyu J."/>
            <person name="He J."/>
            <person name="Xing D."/>
            <person name="Tao Y.J."/>
            <person name="Lu Z."/>
        </authorList>
    </citation>
    <scope>X-RAY CRYSTALLOGRAPHY (2.30 ANGSTROMS) OF 497-662 IN COMPLEX WITH SUCCINYL-COA</scope>
    <scope>FUNCTION</scope>
    <scope>CATALYTIC ACTIVITY</scope>
    <scope>BIOPHYSICOCHEMICAL PROPERTIES</scope>
    <scope>DOMAIN</scope>
    <scope>MUTAGENESIS OF TYR-645</scope>
</reference>
<sequence length="837" mass="93926">MAEPSQAPTPAPAAQPRPLQSPAPAPTPTPAPSPASAPIPTPTPAPAPAPAAAPAGSTGTGGPGVGSGGAGSGGDPARPGLSQQQRASQRKAQVRGLPRAKKLEKLGVFSACKANETCKCNGWKNPKPPTAPRMDLQQPAANLSELCRSCEHPLADHVSHLENVSEDEINRLLGMVVDVENLFMSVHKEEDTDTKQVYFYLFKLLRKCILQMTRPVVEGSLGSPPFEKPNIEQGVLNFVQYKFSHLAPRERQTMFELSKMFLLCLNYWKLETPAQFRQRSQAEDVATYKVNYTRWLCYCHVPQSCDSLPRYETTHVFGRSLLRSIFTVTRRQLLEKFRVEKDKLVPEKRTLILTHFPKFLSMLEEEIYGANSPIWESGFTMPPSEGTQLVPRPASVSAAVVPSTPIFSPSMGGGSNSSLSLDSAGAEPMPGEKRTLPENLTLEDAKRLRVMGDIPMELVNEVMLTITDPAAMLGPETSLLSANAARDETARLEERRGIIEFHVIGNSLTPKANRRVLLWLVGLQNVFSHQLPRMPKEYIARLVFDPKHKTLALIKDGRVIGGICFRMFPTQGFTEIVFCAVTSNEQVKGYGTHLMNHLKEYHIKHNILYFLTYADEYAIGYFKKQGFSKDIKVPKSRYLGYIKDYEGATLMECELNPRIPYTELSHIIKKQKEIIKKLIERKQAQIRKVYPGLSCFKEGVRQIPVESVPGIRETGWKPLGKEKGKELKDPDQLYTTLKNLLAQIKSHPSAWPFMEPVKKSEAPDYYEVIRFPIDLKTMTERLRSRYYVTRKLFVADLQRVIANCREYNPPDSEYCRCASALEKFFYFKLKEGGLIDK</sequence>
<keyword id="KW-0002">3D-structure</keyword>
<keyword id="KW-0007">Acetylation</keyword>
<keyword id="KW-0012">Acyltransferase</keyword>
<keyword id="KW-0025">Alternative splicing</keyword>
<keyword id="KW-0103">Bromodomain</keyword>
<keyword id="KW-0158">Chromosome</keyword>
<keyword id="KW-0963">Cytoplasm</keyword>
<keyword id="KW-0206">Cytoskeleton</keyword>
<keyword id="KW-0945">Host-virus interaction</keyword>
<keyword id="KW-1017">Isopeptide bond</keyword>
<keyword id="KW-0539">Nucleus</keyword>
<keyword id="KW-0597">Phosphoprotein</keyword>
<keyword id="KW-1267">Proteomics identification</keyword>
<keyword id="KW-1185">Reference proteome</keyword>
<keyword id="KW-0804">Transcription</keyword>
<keyword id="KW-0805">Transcription regulation</keyword>
<keyword id="KW-0808">Transferase</keyword>
<keyword id="KW-0832">Ubl conjugation</keyword>
<proteinExistence type="evidence at protein level"/>
<gene>
    <name evidence="32 36" type="primary">KAT2A</name>
    <name evidence="33" type="synonym">GCN5</name>
    <name evidence="1" type="synonym">GCN5L2</name>
</gene>
<evidence type="ECO:0000250" key="1">
    <source>
        <dbReference type="UniProtKB" id="Q9JHD2"/>
    </source>
</evidence>
<evidence type="ECO:0000255" key="2">
    <source>
        <dbReference type="PROSITE-ProRule" id="PRU00035"/>
    </source>
</evidence>
<evidence type="ECO:0000255" key="3">
    <source>
        <dbReference type="PROSITE-ProRule" id="PRU00532"/>
    </source>
</evidence>
<evidence type="ECO:0000256" key="4">
    <source>
        <dbReference type="SAM" id="MobiDB-lite"/>
    </source>
</evidence>
<evidence type="ECO:0000269" key="5">
    <source>
    </source>
</evidence>
<evidence type="ECO:0000269" key="6">
    <source>
    </source>
</evidence>
<evidence type="ECO:0000269" key="7">
    <source>
    </source>
</evidence>
<evidence type="ECO:0000269" key="8">
    <source>
    </source>
</evidence>
<evidence type="ECO:0000269" key="9">
    <source>
    </source>
</evidence>
<evidence type="ECO:0000269" key="10">
    <source>
    </source>
</evidence>
<evidence type="ECO:0000269" key="11">
    <source>
    </source>
</evidence>
<evidence type="ECO:0000269" key="12">
    <source>
    </source>
</evidence>
<evidence type="ECO:0000269" key="13">
    <source>
    </source>
</evidence>
<evidence type="ECO:0000269" key="14">
    <source>
    </source>
</evidence>
<evidence type="ECO:0000269" key="15">
    <source>
    </source>
</evidence>
<evidence type="ECO:0000269" key="16">
    <source>
    </source>
</evidence>
<evidence type="ECO:0000269" key="17">
    <source>
    </source>
</evidence>
<evidence type="ECO:0000269" key="18">
    <source>
    </source>
</evidence>
<evidence type="ECO:0000269" key="19">
    <source>
    </source>
</evidence>
<evidence type="ECO:0000269" key="20">
    <source>
    </source>
</evidence>
<evidence type="ECO:0000269" key="21">
    <source>
    </source>
</evidence>
<evidence type="ECO:0000269" key="22">
    <source>
    </source>
</evidence>
<evidence type="ECO:0000269" key="23">
    <source>
    </source>
</evidence>
<evidence type="ECO:0000269" key="24">
    <source>
    </source>
</evidence>
<evidence type="ECO:0000269" key="25">
    <source>
    </source>
</evidence>
<evidence type="ECO:0000269" key="26">
    <source>
    </source>
</evidence>
<evidence type="ECO:0000269" key="27">
    <source>
    </source>
</evidence>
<evidence type="ECO:0000269" key="28">
    <source>
    </source>
</evidence>
<evidence type="ECO:0000269" key="29">
    <source>
    </source>
</evidence>
<evidence type="ECO:0000269" key="30">
    <source>
    </source>
</evidence>
<evidence type="ECO:0000303" key="31">
    <source>
    </source>
</evidence>
<evidence type="ECO:0000303" key="32">
    <source>
    </source>
</evidence>
<evidence type="ECO:0000303" key="33">
    <source>
    </source>
</evidence>
<evidence type="ECO:0000303" key="34">
    <source>
    </source>
</evidence>
<evidence type="ECO:0000305" key="35"/>
<evidence type="ECO:0000312" key="36">
    <source>
        <dbReference type="HGNC" id="HGNC:4201"/>
    </source>
</evidence>
<evidence type="ECO:0007744" key="37">
    <source>
        <dbReference type="PDB" id="1Z4R"/>
    </source>
</evidence>
<evidence type="ECO:0007744" key="38">
    <source>
        <dbReference type="PDB" id="5H84"/>
    </source>
</evidence>
<evidence type="ECO:0007744" key="39">
    <source>
        <dbReference type="PDB" id="5H86"/>
    </source>
</evidence>
<evidence type="ECO:0007744" key="40">
    <source>
        <dbReference type="PDB" id="5TRL"/>
    </source>
</evidence>
<evidence type="ECO:0007744" key="41">
    <source>
        <dbReference type="PDB" id="5TRM"/>
    </source>
</evidence>
<evidence type="ECO:0007744" key="42">
    <source>
    </source>
</evidence>
<evidence type="ECO:0007744" key="43">
    <source>
    </source>
</evidence>
<evidence type="ECO:0007829" key="44">
    <source>
        <dbReference type="PDB" id="1Z4R"/>
    </source>
</evidence>
<evidence type="ECO:0007829" key="45">
    <source>
        <dbReference type="PDB" id="6J3P"/>
    </source>
</evidence>
<evidence type="ECO:0007829" key="46">
    <source>
        <dbReference type="PDB" id="8H65"/>
    </source>
</evidence>
<feature type="initiator methionine" description="Removed" evidence="42">
    <location>
        <position position="1"/>
    </location>
</feature>
<feature type="chain" id="PRO_0000211202" description="Histone acetyltransferase KAT2A">
    <location>
        <begin position="2"/>
        <end position="837"/>
    </location>
</feature>
<feature type="domain" description="N-acetyltransferase" evidence="3">
    <location>
        <begin position="503"/>
        <end position="656"/>
    </location>
</feature>
<feature type="domain" description="Bromo" evidence="2">
    <location>
        <begin position="728"/>
        <end position="832"/>
    </location>
</feature>
<feature type="region of interest" description="Disordered" evidence="4">
    <location>
        <begin position="1"/>
        <end position="99"/>
    </location>
</feature>
<feature type="region of interest" description="Disordered" evidence="4">
    <location>
        <begin position="407"/>
        <end position="434"/>
    </location>
</feature>
<feature type="region of interest" description="Loop 3" evidence="22">
    <location>
        <begin position="639"/>
        <end position="648"/>
    </location>
</feature>
<feature type="compositionally biased region" description="Pro residues" evidence="4">
    <location>
        <begin position="7"/>
        <end position="51"/>
    </location>
</feature>
<feature type="compositionally biased region" description="Gly residues" evidence="4">
    <location>
        <begin position="58"/>
        <end position="74"/>
    </location>
</feature>
<feature type="compositionally biased region" description="Low complexity" evidence="4">
    <location>
        <begin position="75"/>
        <end position="87"/>
    </location>
</feature>
<feature type="compositionally biased region" description="Basic residues" evidence="4">
    <location>
        <begin position="88"/>
        <end position="99"/>
    </location>
</feature>
<feature type="compositionally biased region" description="Low complexity" evidence="4">
    <location>
        <begin position="416"/>
        <end position="425"/>
    </location>
</feature>
<feature type="active site" description="Proton donor/acceptor" evidence="20 26">
    <location>
        <position position="575"/>
    </location>
</feature>
<feature type="binding site" evidence="13 37">
    <location>
        <begin position="579"/>
        <end position="581"/>
    </location>
    <ligand>
        <name>acetyl-CoA</name>
        <dbReference type="ChEBI" id="CHEBI:57288"/>
    </ligand>
</feature>
<feature type="binding site" evidence="22 40">
    <location>
        <begin position="579"/>
        <end position="581"/>
    </location>
    <ligand>
        <name>succinyl-CoA</name>
        <dbReference type="ChEBI" id="CHEBI:57292"/>
    </ligand>
</feature>
<feature type="binding site" evidence="13 37">
    <location>
        <begin position="586"/>
        <end position="592"/>
    </location>
    <ligand>
        <name>acetyl-CoA</name>
        <dbReference type="ChEBI" id="CHEBI:57288"/>
    </ligand>
</feature>
<feature type="binding site" evidence="22 40">
    <location>
        <begin position="586"/>
        <end position="592"/>
    </location>
    <ligand>
        <name>succinyl-CoA</name>
        <dbReference type="ChEBI" id="CHEBI:57292"/>
    </ligand>
</feature>
<feature type="binding site" evidence="13 37">
    <location>
        <position position="617"/>
    </location>
    <ligand>
        <name>acetyl-CoA</name>
        <dbReference type="ChEBI" id="CHEBI:57288"/>
    </ligand>
</feature>
<feature type="binding site" evidence="22 40">
    <location>
        <position position="617"/>
    </location>
    <ligand>
        <name>succinyl-CoA</name>
        <dbReference type="ChEBI" id="CHEBI:57292"/>
    </ligand>
</feature>
<feature type="modified residue" description="N-acetylalanine" evidence="42">
    <location>
        <position position="2"/>
    </location>
</feature>
<feature type="modified residue" description="Phosphoserine" evidence="17">
    <location>
        <position position="307"/>
    </location>
</feature>
<feature type="modified residue" description="N6-acetyllysine" evidence="17">
    <location>
        <position position="549"/>
    </location>
</feature>
<feature type="modified residue" description="Phosphothreonine" evidence="17">
    <location>
        <position position="735"/>
    </location>
</feature>
<feature type="cross-link" description="Glycyl lysine isopeptide (Lys-Gly) (interchain with G-Cter in SUMO2)" evidence="43">
    <location>
        <position position="728"/>
    </location>
</feature>
<feature type="cross-link" description="Glycyl lysine isopeptide (Lys-Gly) (interchain with G-Cter in SUMO2)" evidence="43">
    <location>
        <position position="759"/>
    </location>
</feature>
<feature type="cross-link" description="Glycyl lysine isopeptide (Lys-Gly) (interchain with G-Cter in SUMO2)" evidence="43">
    <location>
        <position position="791"/>
    </location>
</feature>
<feature type="splice variant" id="VSP_000556" description="In isoform 2." evidence="35">
    <location>
        <begin position="1"/>
        <end position="410"/>
    </location>
</feature>
<feature type="mutagenesis site" description="Slightly reduced ability to acetylate and inhibit PPARGC1A. Strongly reduced ability to acetylate and inhibit PPARGC1A; when associated with A-307 and Q-549." evidence="17">
    <original>S</original>
    <variation>A</variation>
    <location>
        <position position="307"/>
    </location>
</feature>
<feature type="mutagenesis site" description="Mimics acetylation; reduced ability to acetylate and inhibit PPARGC1A. Strongly reduced ability to acetylate and inhibit PPARGC1A; when associated with A-307 and A-735." evidence="17">
    <original>K</original>
    <variation>Q</variation>
    <location>
        <position position="549"/>
    </location>
</feature>
<feature type="mutagenesis site" description="Reduced ability to acetylate and inhibit PPARGC1A." evidence="17">
    <original>M</original>
    <variation>A</variation>
    <location>
        <position position="567"/>
    </location>
</feature>
<feature type="mutagenesis site" description="Catalytically dead mutant; abolished acyltransferase activity; when associated with A-615." evidence="20 26">
    <original>E</original>
    <variation>A</variation>
    <location>
        <position position="575"/>
    </location>
</feature>
<feature type="mutagenesis site" description="Reduced ability to acetylate and inhibit PPARGC1A." evidence="17">
    <original>Y</original>
    <variation>F</variation>
    <location>
        <position position="601"/>
    </location>
</feature>
<feature type="mutagenesis site" description="Catalytically dead mutant; abolished acyltransferase activity; when associated with A-575." evidence="20 26">
    <original>D</original>
    <variation>A</variation>
    <location>
        <position position="615"/>
    </location>
</feature>
<feature type="mutagenesis site" description="Abolised protein acetyltransferase activity." evidence="17">
    <original>YF</original>
    <variation>AA</variation>
    <location>
        <begin position="621"/>
        <end position="622"/>
    </location>
</feature>
<feature type="mutagenesis site" description="Reduced histone succinylation without affecting histone acetylation. Reduced gene expression." evidence="22">
    <original>Y</original>
    <variation>A</variation>
    <location>
        <position position="645"/>
    </location>
</feature>
<feature type="mutagenesis site" description="Slightly reduced ability to acetylate and inhibit PPARGC1A. Strongly reduced ability to acetylate and inhibit PPARGC1A; when associated with Q-549 and A-735." evidence="17">
    <original>T</original>
    <variation>A</variation>
    <location>
        <position position="735"/>
    </location>
</feature>
<feature type="sequence conflict" description="In Ref. 1; AAC39769." evidence="35" ref="1">
    <original>E</original>
    <variation>G</variation>
    <location>
        <position position="116"/>
    </location>
</feature>
<feature type="sequence conflict" description="In Ref. 1; AAC39769." evidence="35" ref="1">
    <original>M</original>
    <variation>I</variation>
    <location>
        <position position="134"/>
    </location>
</feature>
<feature type="sequence conflict" description="In Ref. 1; AAC39769." evidence="35" ref="1">
    <original>K</original>
    <variation>E</variation>
    <location>
        <position position="269"/>
    </location>
</feature>
<feature type="strand" evidence="44">
    <location>
        <begin position="498"/>
        <end position="504"/>
    </location>
</feature>
<feature type="turn" evidence="46">
    <location>
        <begin position="508"/>
        <end position="511"/>
    </location>
</feature>
<feature type="helix" evidence="44">
    <location>
        <begin position="514"/>
        <end position="530"/>
    </location>
</feature>
<feature type="helix" evidence="44">
    <location>
        <begin position="536"/>
        <end position="543"/>
    </location>
</feature>
<feature type="strand" evidence="44">
    <location>
        <begin position="549"/>
        <end position="555"/>
    </location>
</feature>
<feature type="strand" evidence="44">
    <location>
        <begin position="558"/>
        <end position="568"/>
    </location>
</feature>
<feature type="turn" evidence="44">
    <location>
        <begin position="569"/>
        <end position="572"/>
    </location>
</feature>
<feature type="strand" evidence="44">
    <location>
        <begin position="573"/>
        <end position="581"/>
    </location>
</feature>
<feature type="helix" evidence="44">
    <location>
        <begin position="583"/>
        <end position="585"/>
    </location>
</feature>
<feature type="strand" evidence="44">
    <location>
        <begin position="587"/>
        <end position="589"/>
    </location>
</feature>
<feature type="helix" evidence="44">
    <location>
        <begin position="590"/>
        <end position="604"/>
    </location>
</feature>
<feature type="strand" evidence="44">
    <location>
        <begin position="609"/>
        <end position="614"/>
    </location>
</feature>
<feature type="helix" evidence="44">
    <location>
        <begin position="616"/>
        <end position="618"/>
    </location>
</feature>
<feature type="helix" evidence="44">
    <location>
        <begin position="619"/>
        <end position="624"/>
    </location>
</feature>
<feature type="strand" evidence="44">
    <location>
        <begin position="627"/>
        <end position="629"/>
    </location>
</feature>
<feature type="helix" evidence="44">
    <location>
        <begin position="635"/>
        <end position="638"/>
    </location>
</feature>
<feature type="turn" evidence="44">
    <location>
        <begin position="639"/>
        <end position="641"/>
    </location>
</feature>
<feature type="strand" evidence="44">
    <location>
        <begin position="649"/>
        <end position="654"/>
    </location>
</feature>
<feature type="helix" evidence="45">
    <location>
        <begin position="730"/>
        <end position="746"/>
    </location>
</feature>
<feature type="helix" evidence="45">
    <location>
        <begin position="748"/>
        <end position="753"/>
    </location>
</feature>
<feature type="turn" evidence="45">
    <location>
        <begin position="759"/>
        <end position="761"/>
    </location>
</feature>
<feature type="helix" evidence="45">
    <location>
        <begin position="765"/>
        <end position="768"/>
    </location>
</feature>
<feature type="helix" evidence="45">
    <location>
        <begin position="775"/>
        <end position="783"/>
    </location>
</feature>
<feature type="helix" evidence="45">
    <location>
        <begin position="790"/>
        <end position="807"/>
    </location>
</feature>
<feature type="strand" evidence="45">
    <location>
        <begin position="810"/>
        <end position="812"/>
    </location>
</feature>
<feature type="helix" evidence="45">
    <location>
        <begin position="813"/>
        <end position="831"/>
    </location>
</feature>
<name>KAT2A_HUMAN</name>
<protein>
    <recommendedName>
        <fullName>Histone acetyltransferase KAT2A</fullName>
        <ecNumber evidence="16 19 22 26">2.3.1.48</ecNumber>
    </recommendedName>
    <alternativeName>
        <fullName evidence="1">General control of amino acid synthesis protein 5-like 2</fullName>
    </alternativeName>
    <alternativeName>
        <fullName evidence="33 34">Histone acetyltransferase GCN5</fullName>
        <shortName evidence="33 34">hGCN5</shortName>
    </alternativeName>
    <alternativeName>
        <fullName evidence="35">Histone glutaryltransferase KAT2A</fullName>
        <ecNumber evidence="27">2.3.1.-</ecNumber>
    </alternativeName>
    <alternativeName>
        <fullName evidence="35">Histone succinyltransferase KAT2A</fullName>
        <ecNumber evidence="22">2.3.1.-</ecNumber>
    </alternativeName>
    <alternativeName>
        <fullName evidence="35">Lysine acetyltransferase 2A</fullName>
    </alternativeName>
    <alternativeName>
        <fullName evidence="31">STAF97</fullName>
    </alternativeName>
</protein>